<organismHost>
    <name type="scientific">Staphylococcus aureus</name>
    <dbReference type="NCBI Taxonomy" id="1280"/>
</organismHost>
<organism evidence="12 13">
    <name type="scientific">Staphylococcus phage 2638A</name>
    <dbReference type="NCBI Taxonomy" id="320836"/>
    <lineage>
        <taxon>Viruses</taxon>
        <taxon>Duplodnaviria</taxon>
        <taxon>Heunggongvirae</taxon>
        <taxon>Uroviricota</taxon>
        <taxon>Caudoviricetes</taxon>
        <taxon>Fibralongavirus</taxon>
        <taxon>Fibralongavirus fv2638A</taxon>
    </lineage>
</organism>
<keyword id="KW-0002">3D-structure</keyword>
<keyword id="KW-0024">Alternative initiation</keyword>
<keyword id="KW-0929">Antimicrobial</keyword>
<keyword id="KW-0081">Bacteriolytic enzyme</keyword>
<keyword id="KW-0903">Direct protein sequencing</keyword>
<keyword id="KW-1015">Disulfide bond</keyword>
<keyword id="KW-0378">Hydrolase</keyword>
<keyword id="KW-0479">Metal-binding</keyword>
<keyword id="KW-0645">Protease</keyword>
<keyword id="KW-1185">Reference proteome</keyword>
<keyword id="KW-0677">Repeat</keyword>
<keyword id="KW-0862">Zinc</keyword>
<evidence type="ECO:0000250" key="1">
    <source>
        <dbReference type="UniProtKB" id="D6QY02"/>
    </source>
</evidence>
<evidence type="ECO:0000250" key="2">
    <source>
        <dbReference type="UniProtKB" id="P00806"/>
    </source>
</evidence>
<evidence type="ECO:0000250" key="3">
    <source>
        <dbReference type="UniProtKB" id="P10548"/>
    </source>
</evidence>
<evidence type="ECO:0000250" key="4">
    <source>
        <dbReference type="UniProtKB" id="Q6Y7T6"/>
    </source>
</evidence>
<evidence type="ECO:0000255" key="5"/>
<evidence type="ECO:0000255" key="6">
    <source>
        <dbReference type="PROSITE-ProRule" id="PRU01117"/>
    </source>
</evidence>
<evidence type="ECO:0000269" key="7">
    <source>
    </source>
</evidence>
<evidence type="ECO:0000269" key="8">
    <source ref="3"/>
</evidence>
<evidence type="ECO:0000269" key="9">
    <source ref="4"/>
</evidence>
<evidence type="ECO:0000305" key="10"/>
<evidence type="ECO:0000305" key="11">
    <source>
    </source>
</evidence>
<evidence type="ECO:0000312" key="12">
    <source>
        <dbReference type="EMBL" id="AAX90995.1"/>
    </source>
</evidence>
<evidence type="ECO:0000312" key="13">
    <source>
        <dbReference type="Proteomes" id="UP000000988"/>
    </source>
</evidence>
<evidence type="ECO:0007744" key="14">
    <source>
        <dbReference type="PDB" id="6YJ1"/>
    </source>
</evidence>
<evidence type="ECO:0007744" key="15">
    <source>
        <dbReference type="PDB" id="7AQH"/>
    </source>
</evidence>
<evidence type="ECO:0007829" key="16">
    <source>
        <dbReference type="PDB" id="6YJ1"/>
    </source>
</evidence>
<evidence type="ECO:0007829" key="17">
    <source>
        <dbReference type="PDB" id="7AQH"/>
    </source>
</evidence>
<reference key="1">
    <citation type="journal article" date="2005" name="Proc. Natl. Acad. Sci. U.S.A.">
        <title>The complete genomes and proteomes of 27 Staphylococcus aureus bacteriophages.</title>
        <authorList>
            <person name="Kwan T."/>
            <person name="Liu J."/>
            <person name="DuBow M."/>
            <person name="Gros P."/>
            <person name="Pelletier J."/>
        </authorList>
    </citation>
    <scope>NUCLEOTIDE SEQUENCE [GENOMIC DNA]</scope>
</reference>
<reference key="2">
    <citation type="journal article" date="2013" name="Appl. Microbiol. Biotechnol.">
        <title>Staphylococcal phage 2638A endolysin is lytic for Staphylococcus aureus and harbors an inter-lytic-domain secondary translational start site.</title>
        <authorList>
            <person name="Abaev I."/>
            <person name="Foster-Frey J."/>
            <person name="Korobova O."/>
            <person name="Shishkova N."/>
            <person name="Kiseleva N."/>
            <person name="Kopylov P."/>
            <person name="Pryamchuk S."/>
            <person name="Schmelcher M."/>
            <person name="Becker S.C."/>
            <person name="Donovan D.M."/>
        </authorList>
    </citation>
    <scope>FUNCTION</scope>
    <scope>CATALYTIC ACTIVITY</scope>
    <scope>ALTERNATIVE INITIATION</scope>
    <scope>PROTEIN SEQUENCE OF 180-185</scope>
</reference>
<reference evidence="14" key="3">
    <citation type="submission" date="2020-04" db="PDB data bank">
        <title>(CASP target) Crystal structure of the M23 peptidase domain of Staphylococcal phage 2638A endolysin.</title>
        <authorList>
            <person name="Sobieraj A."/>
            <person name="Dunne M."/>
            <person name="Ernst P."/>
            <person name="Pluckthun A."/>
            <person name="Loessner M.J."/>
        </authorList>
    </citation>
    <scope>X-RAY CRYSTALLOGRAPHY (2.30 ANGSTROMS) OF 1-174 IN COMPLEX WITH ZINC</scope>
    <scope>DISULFIDE BONDS</scope>
</reference>
<reference evidence="15" key="4">
    <citation type="submission" date="2020-10" db="PDB data bank">
        <title>Cell wall binding domain of the Staphylococcal phage 2638A endolysin.</title>
        <authorList>
            <person name="Dunne M."/>
            <person name="Sobieraj A."/>
            <person name="Ernst P."/>
            <person name="Mittl P.R.E."/>
            <person name="Pluckthun A."/>
            <person name="Loessner M.J."/>
        </authorList>
    </citation>
    <scope>X-RAY CRYSTALLOGRAPHY (2.49 ANGSTROMS) OF 393-486</scope>
    <scope>DOMAIN</scope>
</reference>
<gene>
    <name evidence="12" type="ORF">ORF007</name>
</gene>
<sequence length="486" mass="55495">MLTAIDYLTKKGWKISSDPRTYDGYPKNYGYRNYHENGINYDEFCGGYHRAFDVYSNETNDVPAVTSGTVIEANDYGNFGGTFVIRDANDNDWIYGHLQRGSMRFVVGDKVNQGDIIGLQGNSNYYDNPMSVHLHLQLRPKDAKKDEKSQVCSGLAMEKYDITNLNAKQDKSKNGSVKELKHIYSNHIKGNKITAPKPSIQGVVIHNDYGSMTPSQYLPWLYARENNGTHVNGWASVYANRNEVLWYHPTDYVEWHCGNQWANANLIGFEVCESYPGRISDKLFLENEEATLKVAADVMKSYGLPVNRNTVRLHNEFFGTSCPHRSWDLHVGKGEPYTTTNINKMKDYFIKRIKHYYDGGKLEVSKAATIKQSDVKQEVKKQEAKQIVKATDWKQNKDGIWYKAEHASFTVTAPEGIITRYKGPWTGHPQAGVLQKGQTIKYDEVQKFDGHVWVSWETFEGETVYMPVRTWDAKTGKVGKLWGEIK</sequence>
<feature type="chain" id="PRO_0000461077" description="Endolysin 2638A">
    <location>
        <begin position="1"/>
        <end position="486"/>
    </location>
</feature>
<feature type="repeat" description="1" evidence="3">
    <location>
        <begin position="67"/>
        <end position="79"/>
    </location>
</feature>
<feature type="repeat" description="2" evidence="3">
    <location>
        <begin position="80"/>
        <end position="92"/>
    </location>
</feature>
<feature type="repeat" description="3" evidence="3">
    <location>
        <begin position="96"/>
        <end position="108"/>
    </location>
</feature>
<feature type="repeat" description="4" evidence="3">
    <location>
        <begin position="109"/>
        <end position="122"/>
    </location>
</feature>
<feature type="repeat" description="5" evidence="3">
    <location>
        <begin position="123"/>
        <end position="135"/>
    </location>
</feature>
<feature type="repeat" description="6" evidence="3">
    <location>
        <begin position="136"/>
        <end position="148"/>
    </location>
</feature>
<feature type="repeat" description="7" evidence="3">
    <location>
        <begin position="149"/>
        <end position="161"/>
    </location>
</feature>
<feature type="repeat" description="8" evidence="3">
    <location>
        <begin position="162"/>
        <end position="174"/>
    </location>
</feature>
<feature type="repeat" description="9" evidence="3">
    <location>
        <begin position="175"/>
        <end position="187"/>
    </location>
</feature>
<feature type="repeat" description="10" evidence="3">
    <location>
        <begin position="188"/>
        <end position="200"/>
    </location>
</feature>
<feature type="domain" description="N-acetylmuramoyl-L-alanine amidase" evidence="5">
    <location>
        <begin position="199"/>
        <end position="324"/>
    </location>
</feature>
<feature type="repeat" description="11" evidence="3">
    <location>
        <begin position="201"/>
        <end position="208"/>
    </location>
</feature>
<feature type="repeat" description="12" evidence="3">
    <location>
        <begin position="209"/>
        <end position="221"/>
    </location>
</feature>
<feature type="repeat" description="13" evidence="3">
    <location>
        <begin position="222"/>
        <end position="234"/>
    </location>
</feature>
<feature type="repeat" description="14; approximate" evidence="3">
    <location>
        <begin position="235"/>
        <end position="247"/>
    </location>
</feature>
<feature type="domain" description="SH3b" evidence="6">
    <location>
        <begin position="406"/>
        <end position="474"/>
    </location>
</feature>
<feature type="region of interest" description="14 X 13 AA tandem repeats of A-E-V-E-T-S-K-[AP]-P-V-E-N-T" evidence="3">
    <location>
        <begin position="67"/>
        <end position="247"/>
    </location>
</feature>
<feature type="binding site" evidence="14">
    <location>
        <position position="49"/>
    </location>
    <ligand>
        <name>Zn(2+)</name>
        <dbReference type="ChEBI" id="CHEBI:29105"/>
        <label>1</label>
    </ligand>
</feature>
<feature type="binding site" evidence="14">
    <location>
        <position position="53"/>
    </location>
    <ligand>
        <name>Zn(2+)</name>
        <dbReference type="ChEBI" id="CHEBI:29105"/>
        <label>1</label>
    </ligand>
</feature>
<feature type="binding site" evidence="14">
    <location>
        <position position="135"/>
    </location>
    <ligand>
        <name>Zn(2+)</name>
        <dbReference type="ChEBI" id="CHEBI:29105"/>
        <label>1</label>
    </ligand>
</feature>
<feature type="binding site" evidence="1">
    <location>
        <position position="206"/>
    </location>
    <ligand>
        <name>Zn(2+)</name>
        <dbReference type="ChEBI" id="CHEBI:29105"/>
        <label>2</label>
    </ligand>
</feature>
<feature type="binding site" evidence="1">
    <location>
        <position position="314"/>
    </location>
    <ligand>
        <name>Zn(2+)</name>
        <dbReference type="ChEBI" id="CHEBI:29105"/>
        <label>2</label>
    </ligand>
</feature>
<feature type="binding site" evidence="1">
    <location>
        <position position="322"/>
    </location>
    <ligand>
        <name>Zn(2+)</name>
        <dbReference type="ChEBI" id="CHEBI:29105"/>
        <label>2</label>
    </ligand>
</feature>
<feature type="disulfide bond" evidence="14">
    <location>
        <begin position="45"/>
        <end position="152"/>
    </location>
</feature>
<feature type="splice variant" id="VSP_062404" description="In isoform Short." evidence="7">
    <location>
        <begin position="1"/>
        <end position="179"/>
    </location>
</feature>
<feature type="splice variant" id="VSP_062409" description="In isoform Short." evidence="7">
    <original>L</original>
    <variation>M</variation>
    <location>
        <position position="180"/>
    </location>
</feature>
<feature type="helix" evidence="16">
    <location>
        <begin position="4"/>
        <end position="10"/>
    </location>
</feature>
<feature type="strand" evidence="16">
    <location>
        <begin position="14"/>
        <end position="17"/>
    </location>
</feature>
<feature type="helix" evidence="16">
    <location>
        <begin position="19"/>
        <end position="21"/>
    </location>
</feature>
<feature type="turn" evidence="16">
    <location>
        <begin position="23"/>
        <end position="26"/>
    </location>
</feature>
<feature type="turn" evidence="16">
    <location>
        <begin position="41"/>
        <end position="47"/>
    </location>
</feature>
<feature type="strand" evidence="16">
    <location>
        <begin position="51"/>
        <end position="55"/>
    </location>
</feature>
<feature type="strand" evidence="16">
    <location>
        <begin position="61"/>
        <end position="63"/>
    </location>
</feature>
<feature type="strand" evidence="16">
    <location>
        <begin position="68"/>
        <end position="77"/>
    </location>
</feature>
<feature type="strand" evidence="16">
    <location>
        <begin position="80"/>
        <end position="86"/>
    </location>
</feature>
<feature type="strand" evidence="16">
    <location>
        <begin position="92"/>
        <end position="98"/>
    </location>
</feature>
<feature type="strand" evidence="16">
    <location>
        <begin position="116"/>
        <end position="121"/>
    </location>
</feature>
<feature type="strand" evidence="16">
    <location>
        <begin position="132"/>
        <end position="139"/>
    </location>
</feature>
<feature type="helix" evidence="16">
    <location>
        <begin position="147"/>
        <end position="152"/>
    </location>
</feature>
<feature type="helix" evidence="16">
    <location>
        <begin position="157"/>
        <end position="159"/>
    </location>
</feature>
<feature type="strand" evidence="17">
    <location>
        <begin position="401"/>
        <end position="411"/>
    </location>
</feature>
<feature type="strand" evidence="17">
    <location>
        <begin position="417"/>
        <end position="424"/>
    </location>
</feature>
<feature type="strand" evidence="17">
    <location>
        <begin position="430"/>
        <end position="434"/>
    </location>
</feature>
<feature type="strand" evidence="17">
    <location>
        <begin position="439"/>
        <end position="448"/>
    </location>
</feature>
<feature type="strand" evidence="17">
    <location>
        <begin position="451"/>
        <end position="457"/>
    </location>
</feature>
<feature type="strand" evidence="17">
    <location>
        <begin position="463"/>
        <end position="471"/>
    </location>
</feature>
<feature type="turn" evidence="17">
    <location>
        <begin position="473"/>
        <end position="475"/>
    </location>
</feature>
<feature type="strand" evidence="17">
    <location>
        <begin position="482"/>
        <end position="484"/>
    </location>
</feature>
<protein>
    <recommendedName>
        <fullName>Endolysin 2638A</fullName>
    </recommendedName>
    <alternativeName>
        <fullName evidence="4">N-acetylmuramoyl-L-alanine amidase</fullName>
        <ecNumber evidence="4">3.5.1.28</ecNumber>
    </alternativeName>
</protein>
<dbReference type="EC" id="3.5.1.28" evidence="4"/>
<dbReference type="EMBL" id="AY954954">
    <property type="protein sequence ID" value="AAX90995.1"/>
    <property type="molecule type" value="Genomic_DNA"/>
</dbReference>
<dbReference type="RefSeq" id="YP_239818.1">
    <molecule id="Q4ZD58-1"/>
    <property type="nucleotide sequence ID" value="NC_007051.1"/>
</dbReference>
<dbReference type="PDB" id="6YJ1">
    <property type="method" value="X-ray"/>
    <property type="resolution" value="2.30 A"/>
    <property type="chains" value="A/B=1-174"/>
</dbReference>
<dbReference type="PDB" id="7AQH">
    <property type="method" value="X-ray"/>
    <property type="resolution" value="2.49 A"/>
    <property type="chains" value="A/B/C/D/E/F/G/H=393-486"/>
</dbReference>
<dbReference type="PDBsum" id="6YJ1"/>
<dbReference type="PDBsum" id="7AQH"/>
<dbReference type="SMR" id="Q4ZD58"/>
<dbReference type="KEGG" id="vg:5132933"/>
<dbReference type="OrthoDB" id="15584at10239"/>
<dbReference type="Proteomes" id="UP000000988">
    <property type="component" value="Genome"/>
</dbReference>
<dbReference type="GO" id="GO:0046872">
    <property type="term" value="F:metal ion binding"/>
    <property type="evidence" value="ECO:0007669"/>
    <property type="project" value="UniProtKB-KW"/>
</dbReference>
<dbReference type="GO" id="GO:0004222">
    <property type="term" value="F:metalloendopeptidase activity"/>
    <property type="evidence" value="ECO:0007669"/>
    <property type="project" value="TreeGrafter"/>
</dbReference>
<dbReference type="GO" id="GO:0008745">
    <property type="term" value="F:N-acetylmuramoyl-L-alanine amidase activity"/>
    <property type="evidence" value="ECO:0007669"/>
    <property type="project" value="InterPro"/>
</dbReference>
<dbReference type="GO" id="GO:0042742">
    <property type="term" value="P:defense response to bacterium"/>
    <property type="evidence" value="ECO:0007669"/>
    <property type="project" value="UniProtKB-KW"/>
</dbReference>
<dbReference type="GO" id="GO:0009253">
    <property type="term" value="P:peptidoglycan catabolic process"/>
    <property type="evidence" value="ECO:0007669"/>
    <property type="project" value="InterPro"/>
</dbReference>
<dbReference type="GO" id="GO:0006508">
    <property type="term" value="P:proteolysis"/>
    <property type="evidence" value="ECO:0007669"/>
    <property type="project" value="UniProtKB-KW"/>
</dbReference>
<dbReference type="GO" id="GO:0001897">
    <property type="term" value="P:symbiont-mediated cytolysis of host cell"/>
    <property type="evidence" value="ECO:0007669"/>
    <property type="project" value="UniProtKB-ARBA"/>
</dbReference>
<dbReference type="CDD" id="cd12797">
    <property type="entry name" value="M23_peptidase"/>
    <property type="match status" value="1"/>
</dbReference>
<dbReference type="CDD" id="cd06583">
    <property type="entry name" value="PGRP"/>
    <property type="match status" value="1"/>
</dbReference>
<dbReference type="Gene3D" id="2.70.70.10">
    <property type="entry name" value="Glucose Permease (Domain IIA)"/>
    <property type="match status" value="1"/>
</dbReference>
<dbReference type="Gene3D" id="3.40.80.10">
    <property type="entry name" value="Peptidoglycan recognition protein-like"/>
    <property type="match status" value="1"/>
</dbReference>
<dbReference type="Gene3D" id="2.30.30.40">
    <property type="entry name" value="SH3 Domains"/>
    <property type="match status" value="1"/>
</dbReference>
<dbReference type="InterPro" id="IPR036505">
    <property type="entry name" value="Amidase/PGRP_sf"/>
</dbReference>
<dbReference type="InterPro" id="IPR002502">
    <property type="entry name" value="Amidase_domain"/>
</dbReference>
<dbReference type="InterPro" id="IPR050570">
    <property type="entry name" value="Cell_wall_metabolism_enzyme"/>
</dbReference>
<dbReference type="InterPro" id="IPR011055">
    <property type="entry name" value="Dup_hybrid_motif"/>
</dbReference>
<dbReference type="InterPro" id="IPR016047">
    <property type="entry name" value="Peptidase_M23"/>
</dbReference>
<dbReference type="InterPro" id="IPR003646">
    <property type="entry name" value="SH3-like_bac-type"/>
</dbReference>
<dbReference type="PANTHER" id="PTHR21666:SF270">
    <property type="entry name" value="MUREIN HYDROLASE ACTIVATOR ENVC"/>
    <property type="match status" value="1"/>
</dbReference>
<dbReference type="PANTHER" id="PTHR21666">
    <property type="entry name" value="PEPTIDASE-RELATED"/>
    <property type="match status" value="1"/>
</dbReference>
<dbReference type="Pfam" id="PF01510">
    <property type="entry name" value="Amidase_2"/>
    <property type="match status" value="1"/>
</dbReference>
<dbReference type="Pfam" id="PF01551">
    <property type="entry name" value="Peptidase_M23"/>
    <property type="match status" value="1"/>
</dbReference>
<dbReference type="Pfam" id="PF08460">
    <property type="entry name" value="SH3_5"/>
    <property type="match status" value="1"/>
</dbReference>
<dbReference type="SMART" id="SM00644">
    <property type="entry name" value="Ami_2"/>
    <property type="match status" value="1"/>
</dbReference>
<dbReference type="SMART" id="SM00287">
    <property type="entry name" value="SH3b"/>
    <property type="match status" value="1"/>
</dbReference>
<dbReference type="SUPFAM" id="SSF51261">
    <property type="entry name" value="Duplicated hybrid motif"/>
    <property type="match status" value="1"/>
</dbReference>
<dbReference type="SUPFAM" id="SSF55846">
    <property type="entry name" value="N-acetylmuramoyl-L-alanine amidase-like"/>
    <property type="match status" value="1"/>
</dbReference>
<dbReference type="PROSITE" id="PS51781">
    <property type="entry name" value="SH3B"/>
    <property type="match status" value="1"/>
</dbReference>
<proteinExistence type="evidence at protein level"/>
<name>ENLYS_BP263</name>
<accession>Q4ZD58</accession>
<comment type="function">
    <text evidence="4 7">Endolysin that degrades host peptidoglycans and participates in the sequential events which lead to the programmed host cell lysis releasing the mature viral particles (PubMed:22777279). The N-acetyl-muramidase activity cleaves between N-acetylmuramic acid and N-acetylglucosamine bonds (By similarity).</text>
</comment>
<comment type="catalytic activity">
    <reaction evidence="11">
        <text>Hydrolyzes the link between N-acetylmuramoyl residues and L-amino acid residues in certain cell-wall glycopeptides.</text>
        <dbReference type="EC" id="3.5.1.28"/>
    </reaction>
</comment>
<comment type="cofactor">
    <cofactor evidence="2">
        <name>Zn(2+)</name>
        <dbReference type="ChEBI" id="CHEBI:29105"/>
    </cofactor>
    <text evidence="2">Zn(2+) is required for amidase activity.</text>
</comment>
<comment type="alternative products">
    <event type="alternative initiation"/>
    <isoform>
        <id>Q4ZD58-1</id>
        <name>Long</name>
        <sequence type="displayed"/>
    </isoform>
    <isoform>
        <id>Q4ZD58-2</id>
        <name>Short</name>
        <sequence type="described" ref="VSP_062404 VSP_062409"/>
    </isoform>
    <text evidence="7">The short isoform initiates at a TTG codon.</text>
</comment>
<comment type="domain">
    <text evidence="4 7 8 9">Contains a M23 peptidase domain at the N-terminus, a central amidase domain and a SH3b cell wall-binding domain at the C-terminus (PubMed:22777279, Ref.3, Ref.4). The CHAP domain contains a tightly bound structural Ca(2+) ion and it is present at the N-terminus and is associated with the endopeptidase activity (By similarity). The SH3b domain increases the amidase domain activity (PubMed:22777279). The amidase domain confers most of the lytic activity (PubMed:22777279).</text>
</comment>
<comment type="miscellaneous">
    <molecule>Isoform Short</molecule>
    <text evidence="7">Starts at a non-canonical codon TTG.</text>
</comment>
<comment type="similarity">
    <text evidence="10">Belongs to the N-acetylmuramoyl-L-alanine amidase 2 family.</text>
</comment>